<accession>Q6QME8</accession>
<gene>
    <name type="primary">AGO2</name>
    <name type="synonym">EIF2C2</name>
</gene>
<evidence type="ECO:0000250" key="1"/>
<evidence type="ECO:0000250" key="2">
    <source>
        <dbReference type="UniProtKB" id="Q8CJG0"/>
    </source>
</evidence>
<evidence type="ECO:0000250" key="3">
    <source>
        <dbReference type="UniProtKB" id="Q9UKV8"/>
    </source>
</evidence>
<evidence type="ECO:0000255" key="4"/>
<evidence type="ECO:0000255" key="5">
    <source>
        <dbReference type="HAMAP-Rule" id="MF_03031"/>
    </source>
</evidence>
<evidence type="ECO:0000255" key="6">
    <source>
        <dbReference type="PROSITE-ProRule" id="PRU00142"/>
    </source>
</evidence>
<evidence type="ECO:0000256" key="7">
    <source>
        <dbReference type="SAM" id="MobiDB-lite"/>
    </source>
</evidence>
<evidence type="ECO:0000312" key="8">
    <source>
        <dbReference type="EMBL" id="AAS21301.1"/>
    </source>
</evidence>
<protein>
    <recommendedName>
        <fullName evidence="5">Protein argonaute-2</fullName>
        <shortName evidence="5">Argonaute2</shortName>
        <ecNumber evidence="5">3.1.26.n2</ecNumber>
    </recommendedName>
    <alternativeName>
        <fullName>Argonaute RISC catalytic component 2</fullName>
    </alternativeName>
    <alternativeName>
        <fullName evidence="5">Eukaryotic translation initiation factor 2C 2</fullName>
        <shortName evidence="5">eIF-2C 2</shortName>
        <shortName evidence="5">eIF2C 2</shortName>
    </alternativeName>
    <alternativeName>
        <fullName evidence="5">Protein slicer</fullName>
    </alternativeName>
</protein>
<name>AGO2_BOVIN</name>
<organism>
    <name type="scientific">Bos taurus</name>
    <name type="common">Bovine</name>
    <dbReference type="NCBI Taxonomy" id="9913"/>
    <lineage>
        <taxon>Eukaryota</taxon>
        <taxon>Metazoa</taxon>
        <taxon>Chordata</taxon>
        <taxon>Craniata</taxon>
        <taxon>Vertebrata</taxon>
        <taxon>Euteleostomi</taxon>
        <taxon>Mammalia</taxon>
        <taxon>Eutheria</taxon>
        <taxon>Laurasiatheria</taxon>
        <taxon>Artiodactyla</taxon>
        <taxon>Ruminantia</taxon>
        <taxon>Pecora</taxon>
        <taxon>Bovidae</taxon>
        <taxon>Bovinae</taxon>
        <taxon>Bos</taxon>
    </lineage>
</organism>
<dbReference type="EC" id="3.1.26.n2" evidence="5"/>
<dbReference type="EMBL" id="AY533678">
    <property type="protein sequence ID" value="AAS21301.1"/>
    <property type="molecule type" value="mRNA"/>
</dbReference>
<dbReference type="RefSeq" id="NP_991363.1">
    <property type="nucleotide sequence ID" value="NM_205794.1"/>
</dbReference>
<dbReference type="SMR" id="Q6QME8"/>
<dbReference type="FunCoup" id="Q6QME8">
    <property type="interactions" value="1624"/>
</dbReference>
<dbReference type="STRING" id="9913.ENSBTAP00000002068"/>
<dbReference type="PaxDb" id="9913-ENSBTAP00000002068"/>
<dbReference type="GeneID" id="404130"/>
<dbReference type="KEGG" id="bta:404130"/>
<dbReference type="CTD" id="27161"/>
<dbReference type="eggNOG" id="KOG1041">
    <property type="taxonomic scope" value="Eukaryota"/>
</dbReference>
<dbReference type="InParanoid" id="Q6QME8"/>
<dbReference type="OrthoDB" id="10252740at2759"/>
<dbReference type="Proteomes" id="UP000009136">
    <property type="component" value="Unplaced"/>
</dbReference>
<dbReference type="GO" id="GO:0005737">
    <property type="term" value="C:cytoplasm"/>
    <property type="evidence" value="ECO:0000250"/>
    <property type="project" value="UniProtKB"/>
</dbReference>
<dbReference type="GO" id="GO:0036464">
    <property type="term" value="C:cytoplasmic ribonucleoprotein granule"/>
    <property type="evidence" value="ECO:0000318"/>
    <property type="project" value="GO_Central"/>
</dbReference>
<dbReference type="GO" id="GO:0005634">
    <property type="term" value="C:nucleus"/>
    <property type="evidence" value="ECO:0000318"/>
    <property type="project" value="GO_Central"/>
</dbReference>
<dbReference type="GO" id="GO:0000932">
    <property type="term" value="C:P-body"/>
    <property type="evidence" value="ECO:0007669"/>
    <property type="project" value="UniProtKB-SubCell"/>
</dbReference>
<dbReference type="GO" id="GO:0016442">
    <property type="term" value="C:RISC complex"/>
    <property type="evidence" value="ECO:0000250"/>
    <property type="project" value="UniProtKB"/>
</dbReference>
<dbReference type="GO" id="GO:0070578">
    <property type="term" value="C:RISC-loading complex"/>
    <property type="evidence" value="ECO:0000250"/>
    <property type="project" value="UniProtKB"/>
</dbReference>
<dbReference type="GO" id="GO:0070551">
    <property type="term" value="F:endoribonuclease activity, cleaving siRNA-paired mRNA"/>
    <property type="evidence" value="ECO:0000250"/>
    <property type="project" value="UniProtKB"/>
</dbReference>
<dbReference type="GO" id="GO:0046872">
    <property type="term" value="F:metal ion binding"/>
    <property type="evidence" value="ECO:0007669"/>
    <property type="project" value="UniProtKB-KW"/>
</dbReference>
<dbReference type="GO" id="GO:0035198">
    <property type="term" value="F:miRNA binding"/>
    <property type="evidence" value="ECO:0000318"/>
    <property type="project" value="GO_Central"/>
</dbReference>
<dbReference type="GO" id="GO:0098808">
    <property type="term" value="F:mRNA cap binding"/>
    <property type="evidence" value="ECO:0000250"/>
    <property type="project" value="UniProtKB"/>
</dbReference>
<dbReference type="GO" id="GO:0000340">
    <property type="term" value="F:RNA 7-methylguanosine cap binding"/>
    <property type="evidence" value="ECO:0000250"/>
    <property type="project" value="UniProtKB"/>
</dbReference>
<dbReference type="GO" id="GO:0004521">
    <property type="term" value="F:RNA endonuclease activity"/>
    <property type="evidence" value="ECO:0000318"/>
    <property type="project" value="GO_Central"/>
</dbReference>
<dbReference type="GO" id="GO:0003727">
    <property type="term" value="F:single-stranded RNA binding"/>
    <property type="evidence" value="ECO:0000318"/>
    <property type="project" value="GO_Central"/>
</dbReference>
<dbReference type="GO" id="GO:0035197">
    <property type="term" value="F:siRNA binding"/>
    <property type="evidence" value="ECO:0000250"/>
    <property type="project" value="UniProtKB"/>
</dbReference>
<dbReference type="GO" id="GO:0035278">
    <property type="term" value="P:miRNA-mediated gene silencing by inhibition of translation"/>
    <property type="evidence" value="ECO:0000250"/>
    <property type="project" value="UniProtKB"/>
</dbReference>
<dbReference type="GO" id="GO:0035279">
    <property type="term" value="P:miRNA-mediated gene silencing by mRNA destabilization"/>
    <property type="evidence" value="ECO:0000250"/>
    <property type="project" value="UniProtKB"/>
</dbReference>
<dbReference type="GO" id="GO:0045947">
    <property type="term" value="P:negative regulation of translational initiation"/>
    <property type="evidence" value="ECO:0000250"/>
    <property type="project" value="UniProtKB"/>
</dbReference>
<dbReference type="GO" id="GO:0031054">
    <property type="term" value="P:pre-miRNA processing"/>
    <property type="evidence" value="ECO:0000250"/>
    <property type="project" value="UniProtKB"/>
</dbReference>
<dbReference type="GO" id="GO:0006355">
    <property type="term" value="P:regulation of DNA-templated transcription"/>
    <property type="evidence" value="ECO:0007669"/>
    <property type="project" value="InterPro"/>
</dbReference>
<dbReference type="GO" id="GO:0035194">
    <property type="term" value="P:regulatory ncRNA-mediated post-transcriptional gene silencing"/>
    <property type="evidence" value="ECO:0000318"/>
    <property type="project" value="GO_Central"/>
</dbReference>
<dbReference type="CDD" id="cd02846">
    <property type="entry name" value="PAZ_argonaute_like"/>
    <property type="match status" value="1"/>
</dbReference>
<dbReference type="CDD" id="cd04657">
    <property type="entry name" value="Piwi_ago-like"/>
    <property type="match status" value="1"/>
</dbReference>
<dbReference type="FunFam" id="2.170.260.10:FF:000001">
    <property type="entry name" value="Protein argonaute-2"/>
    <property type="match status" value="1"/>
</dbReference>
<dbReference type="FunFam" id="3.30.420.10:FF:000001">
    <property type="entry name" value="Protein argonaute-2"/>
    <property type="match status" value="1"/>
</dbReference>
<dbReference type="FunFam" id="3.40.50.2300:FF:000005">
    <property type="entry name" value="Protein argonaute-2"/>
    <property type="match status" value="1"/>
</dbReference>
<dbReference type="Gene3D" id="3.40.50.2300">
    <property type="match status" value="1"/>
</dbReference>
<dbReference type="Gene3D" id="2.170.260.10">
    <property type="entry name" value="paz domain"/>
    <property type="match status" value="1"/>
</dbReference>
<dbReference type="Gene3D" id="3.30.420.10">
    <property type="entry name" value="Ribonuclease H-like superfamily/Ribonuclease H"/>
    <property type="match status" value="1"/>
</dbReference>
<dbReference type="HAMAP" id="MF_03031">
    <property type="entry name" value="AGO2"/>
    <property type="match status" value="1"/>
</dbReference>
<dbReference type="InterPro" id="IPR028602">
    <property type="entry name" value="AGO2"/>
</dbReference>
<dbReference type="InterPro" id="IPR014811">
    <property type="entry name" value="ArgoL1"/>
</dbReference>
<dbReference type="InterPro" id="IPR032472">
    <property type="entry name" value="ArgoL2"/>
</dbReference>
<dbReference type="InterPro" id="IPR032473">
    <property type="entry name" value="Argonaute_Mid_dom"/>
</dbReference>
<dbReference type="InterPro" id="IPR032474">
    <property type="entry name" value="Argonaute_N"/>
</dbReference>
<dbReference type="InterPro" id="IPR003100">
    <property type="entry name" value="PAZ_dom"/>
</dbReference>
<dbReference type="InterPro" id="IPR036085">
    <property type="entry name" value="PAZ_dom_sf"/>
</dbReference>
<dbReference type="InterPro" id="IPR003165">
    <property type="entry name" value="Piwi"/>
</dbReference>
<dbReference type="InterPro" id="IPR045246">
    <property type="entry name" value="Piwi_ago-like"/>
</dbReference>
<dbReference type="InterPro" id="IPR012337">
    <property type="entry name" value="RNaseH-like_sf"/>
</dbReference>
<dbReference type="InterPro" id="IPR036397">
    <property type="entry name" value="RNaseH_sf"/>
</dbReference>
<dbReference type="PANTHER" id="PTHR22891">
    <property type="entry name" value="EUKARYOTIC TRANSLATION INITIATION FACTOR 2C"/>
    <property type="match status" value="1"/>
</dbReference>
<dbReference type="Pfam" id="PF08699">
    <property type="entry name" value="ArgoL1"/>
    <property type="match status" value="1"/>
</dbReference>
<dbReference type="Pfam" id="PF16488">
    <property type="entry name" value="ArgoL2"/>
    <property type="match status" value="1"/>
</dbReference>
<dbReference type="Pfam" id="PF16487">
    <property type="entry name" value="ArgoMid"/>
    <property type="match status" value="1"/>
</dbReference>
<dbReference type="Pfam" id="PF16486">
    <property type="entry name" value="ArgoN"/>
    <property type="match status" value="1"/>
</dbReference>
<dbReference type="Pfam" id="PF02170">
    <property type="entry name" value="PAZ"/>
    <property type="match status" value="1"/>
</dbReference>
<dbReference type="Pfam" id="PF02171">
    <property type="entry name" value="Piwi"/>
    <property type="match status" value="1"/>
</dbReference>
<dbReference type="SMART" id="SM01163">
    <property type="entry name" value="DUF1785"/>
    <property type="match status" value="1"/>
</dbReference>
<dbReference type="SMART" id="SM00949">
    <property type="entry name" value="PAZ"/>
    <property type="match status" value="1"/>
</dbReference>
<dbReference type="SMART" id="SM00950">
    <property type="entry name" value="Piwi"/>
    <property type="match status" value="1"/>
</dbReference>
<dbReference type="SUPFAM" id="SSF101690">
    <property type="entry name" value="PAZ domain"/>
    <property type="match status" value="1"/>
</dbReference>
<dbReference type="SUPFAM" id="SSF53098">
    <property type="entry name" value="Ribonuclease H-like"/>
    <property type="match status" value="1"/>
</dbReference>
<dbReference type="PROSITE" id="PS50821">
    <property type="entry name" value="PAZ"/>
    <property type="match status" value="1"/>
</dbReference>
<dbReference type="PROSITE" id="PS50822">
    <property type="entry name" value="PIWI"/>
    <property type="match status" value="1"/>
</dbReference>
<proteinExistence type="evidence at transcript level"/>
<sequence length="860" mass="97388">MYSGAGPALAPPAPPPPPIQGYAFKPPPRPDFGTSGRTIKLQANFFEMDIPKIDIYHYELDIKPEKCPRRVNREIVEHMVQHFKTQIFGDRKPVFDGRKNLYTAMPLPIGRDKVELEVTLPGEGKDRIFKVSIKWVSCVSLQALHDALSGRLPSVPFETIQALDVVMRHLPSMRYTPVGRSFFTASEGCSNPLGGGREVWFGFHQSVRPSLWKMMLNIDVSATAFYKAQPVIEFVCEVLDFKSIEEQQKPLTDSQRVKFTKEIKGLKVEITHCGQMKRKYRVCNVTRRPASHQTFPLQQESGQTVECTVAQYFKDRHKLVLRYPHLPCLQVGQEQKHTYLPLEVCNIVAGQRCIKKLTDNQTSTMIRATARSAPDRQEEISKLMRSASFNTDPYVREFGIMVKDEMTDVTGRVLQPPSILYGGRNKAIATPVQGVWDMRNKQFHTGIEIKVWAIACFAPQRQCTEVHLKSFTEQLRKISRDAGMPIQGQPCFCKYAQGADSVEPMFRHLKNTYAGLQLVVVILPGKTPVYAEVKRVGDTVLGMATQCVQMKNVQRTTPQTLSNLWLKINVKLGGVNNILLPQGRPPVFQQPVIFLGADVTHPPAGDGKKPSIAAVVGSMDAHPNRYCATVRVQQHRQEIIQDLAAMVRELLIQFYKSTRFKPTRIIFYRDGVSEGQFQQVLHHELLAIREACIKLEKDYQPGITFIVVQKRHHTRLFCTDKNERVGKSGNIPAGTTVDTKITHPTEFDFYLCSHAGIQGTSRPSHYHVLWDDNRFSSDELQILTYQLCHTYVRCTRSVSIPAPAYYAHLVAFRARYHLVDKEHDSAEGSHTSGQSNGRDHQALAKAVQVHQDTLRTMYFA</sequence>
<comment type="function">
    <text evidence="5">Required for RNA-mediated gene silencing (RNAi) by the RNA-induced silencing complex (RISC). The 'minimal RISC' appears to include AGO2 bound to a short guide RNA such as a microRNA (miRNA) or short interfering RNA (siRNA). These guide RNAs direct RISC to complementary mRNAs that are targets for RISC-mediated gene silencing. The precise mechanism of gene silencing depends on the degree of complementarity between the miRNA or siRNA and its target. Binding of RISC to a perfectly complementary mRNA generally results in silencing due to endonucleolytic cleavage of the mRNA specifically by AGO2. Binding of RISC to a partially complementary mRNA results in silencing through inhibition of translation, and this is independent of endonuclease activity. May inhibit translation initiation by binding to the 7-methylguanosine cap, thereby preventing the recruitment of the translation initiation factor eIF4-E. May also inhibit translation initiation via interaction with EIF6, which itself binds to the 60S ribosomal subunit and prevents its association with the 40S ribosomal subunit. The inhibition of translational initiation leads to the accumulation of the affected mRNA in cytoplasmic processing bodies (P-bodies), where mRNA degradation may subsequently occur. In some cases RISC-mediated translational repression is also observed for miRNAs that perfectly match the 3' untranslated region (3'-UTR). Can also up-regulate the translation of specific mRNAs under certain growth conditions. Binds to the AU element of the 3'-UTR of the TNF (TNF-alpha) mRNA and up-regulates translation under conditions of serum starvation. Also required for transcriptional gene silencing (TGS), in which short RNAs known as antigene RNAs or agRNAs direct the transcriptional repression of complementary promoter regions.</text>
</comment>
<comment type="catalytic activity">
    <reaction evidence="5">
        <text>Endonucleolytic cleavage to 5'-phosphomonoester.</text>
        <dbReference type="EC" id="3.1.26.n2"/>
    </reaction>
</comment>
<comment type="cofactor">
    <cofactor evidence="1">
        <name>Mg(2+)</name>
        <dbReference type="ChEBI" id="CHEBI:18420"/>
    </cofactor>
    <cofactor evidence="1">
        <name>Mn(2+)</name>
        <dbReference type="ChEBI" id="CHEBI:29035"/>
    </cofactor>
</comment>
<comment type="subunit">
    <text evidence="2 3 5">Interacts with DICER1 through its Piwi domain and with TARBP2 during assembly of the RNA-induced silencing complex (RISC). Together, DICER1, AGO2 and TARBP2 constitute the trimeric RISC loading complex (RLC), or micro-RNA (miRNA) loading complex (miRLC). Within the RLC/miRLC, DICER1 and TARBP2 are required to process precursor miRNAs (pre-miRNAs) to mature miRNAs and then load them onto AGO2. AGO2 bound to the mature miRNA constitutes the minimal RISC and may subsequently dissociate from DICER1 and TARBP2. Note however that the term RISC has also been used to describe the trimeric RLC/miRLC. The formation of RISC complexes containing siRNAs rather than miRNAs appears to occur independently of DICER1. Interacts with AGO1. Also interacts with DDB1, DDX5, DDX6, DDX20, DHX30, DHX36, DDX47, DHX9, ELAVL, FXR1, GEMIN4, HNRNPF, IGF2BP1, ILF3, IMP8, MATR3, PABPC1, PRMT5, P4HA1, P4HB, RBM4, SART3, TNRC6A, TNRC6B, UPF1 and YBX1. Interacts with the P-body components DCP1A and XRN1. Associates with polysomes and messenger ribonucleoproteins (mNRPs). Interacts with RBM4; the interaction is modulated under stress-induced conditions, occurs under both cell proliferation and differentiation conditions and in an RNA- and phosphorylation-independent manner. Interacts with LIMD1, WTIP and AJUBA. Interacts with TRIM71; the interaction increases in presence of RNA. Interacts with APOBEC3G in an RNA-dependent manner. Interacts with APOBEC3A, APOBEC3C, APOBEC3F and APOBEC3H. Interacts with DICER1, TARBP2, EIF6, MOV10 and RPL7A (60S ribosome subunit); they form a large RNA-induced silencing complex (RISC). Interacts with FMR1. Interacts with ZFP36. Interacts with RC3H1; the interaction is RNA independent (By similarity). Found in a complex composed of AGO2, CHD7 and ARB2A (By similarity). Interacts with SND1 and SYT11 (By similarity). Interacts with CLNK (By similarity). Interacts with GARRE1 (By similarity). Interacts with GRB2; this interaction is important for the formation of a ternary complex containing GRB2, AGO2 and DICER1 (By similarity).</text>
</comment>
<comment type="subcellular location">
    <subcellularLocation>
        <location evidence="5">Cytoplasm</location>
        <location evidence="5">P-body</location>
    </subcellularLocation>
    <subcellularLocation>
        <location evidence="5">Nucleus</location>
    </subcellularLocation>
    <text evidence="5">Translational repression of mRNAs results in their recruitment to P-bodies. Translocation to the nucleus requires IMP8.</text>
</comment>
<comment type="domain">
    <text evidence="5">The Piwi domain may perform RNA cleavage by a mechanism similar to that of RNase H. However, while RNase H utilizes a triad of Asp-Asp-Glu (DDE) for metal ion coordination, this protein appears to utilize a triad of Asp-Asp-His (DDH).</text>
</comment>
<comment type="PTM">
    <text evidence="5">Hydroxylated. 4-hydroxylation appears to enhance protein stability but is not required for miRNA-binding or endonuclease activity.</text>
</comment>
<comment type="PTM">
    <text evidence="3">Ubiquitinated on surface-exposed lysines by a SCF-like E3 ubiquitin-protein ligase complex containing ZSWIM8 during target-directed microRNA degradation (TDMD), a process that mediates degradation of microRNAs (miRNAs). Ubiquitination by the SCF-like E3 ubiquitin-protein ligase complex containing ZSWIM8 leads to its subsequent degradation, thereby exposing miRNAs for degradation. ZSWIM8 recognizes and binds AGO2 when it is engaged with a TDMD target.</text>
</comment>
<comment type="PTM">
    <text evidence="3">Phosphorylation at Ser-388 by AKT3; leads to up-regulate translational repression of microRNA target and down-regulate endonucleolytic cleavage.</text>
</comment>
<comment type="PTM">
    <text evidence="3">A phosphorylation cycle of C-terminal serine cluster (Ser-825-Ser-835) regulates the release of target mRNAs. Target-binding leads to phosphorylation of these residues by CSNK1A1, which reduces the affinity of AGO2 for mRNA and enables target release. The ANKRD52-PPP6C phosphatase complex dephosphorylates the residues, which primes AGO2 for binding a new target.</text>
</comment>
<comment type="similarity">
    <text evidence="5">Belongs to the argonaute family. Ago subfamily.</text>
</comment>
<feature type="chain" id="PRO_0000233353" description="Protein argonaute-2">
    <location>
        <begin position="1"/>
        <end position="860"/>
    </location>
</feature>
<feature type="domain" description="PAZ" evidence="6">
    <location>
        <begin position="230"/>
        <end position="349"/>
    </location>
</feature>
<feature type="domain" description="Piwi" evidence="5">
    <location>
        <begin position="518"/>
        <end position="819"/>
    </location>
</feature>
<feature type="region of interest" description="Disordered" evidence="7">
    <location>
        <begin position="1"/>
        <end position="30"/>
    </location>
</feature>
<feature type="region of interest" description="Interaction with guide RNA" evidence="1">
    <location>
        <begin position="312"/>
        <end position="317"/>
    </location>
</feature>
<feature type="region of interest" description="Interaction with guide RNA" evidence="1">
    <location>
        <begin position="525"/>
        <end position="567"/>
    </location>
</feature>
<feature type="region of interest" description="Interaction with GW182 family members" evidence="4">
    <location>
        <begin position="588"/>
        <end position="591"/>
    </location>
</feature>
<feature type="region of interest" description="Interaction with GW182 family members" evidence="4">
    <location>
        <begin position="651"/>
        <end position="661"/>
    </location>
</feature>
<feature type="region of interest" description="Interaction with guide RNA" evidence="1">
    <location>
        <begin position="710"/>
        <end position="711"/>
    </location>
</feature>
<feature type="region of interest" description="Interaction with guide RNA" evidence="1">
    <location>
        <begin position="754"/>
        <end position="762"/>
    </location>
</feature>
<feature type="region of interest" description="Interaction with guide RNA" evidence="1">
    <location>
        <begin position="791"/>
        <end position="813"/>
    </location>
</feature>
<feature type="compositionally biased region" description="Pro residues" evidence="7">
    <location>
        <begin position="9"/>
        <end position="30"/>
    </location>
</feature>
<feature type="binding site" evidence="5">
    <location>
        <position position="598"/>
    </location>
    <ligand>
        <name>a divalent metal cation</name>
        <dbReference type="ChEBI" id="CHEBI:60240"/>
    </ligand>
</feature>
<feature type="binding site" evidence="5">
    <location>
        <position position="670"/>
    </location>
    <ligand>
        <name>a divalent metal cation</name>
        <dbReference type="ChEBI" id="CHEBI:60240"/>
    </ligand>
</feature>
<feature type="binding site" evidence="5">
    <location>
        <position position="808"/>
    </location>
    <ligand>
        <name>a divalent metal cation</name>
        <dbReference type="ChEBI" id="CHEBI:60240"/>
    </ligand>
</feature>
<feature type="modified residue" description="3'-nitrotyrosine" evidence="2 5">
    <location>
        <position position="2"/>
    </location>
</feature>
<feature type="modified residue" description="Phosphoserine" evidence="3">
    <location>
        <position position="388"/>
    </location>
</feature>
<feature type="modified residue" description="4-hydroxyproline" evidence="5">
    <location>
        <position position="701"/>
    </location>
</feature>
<feature type="modified residue" description="Phosphoserine" evidence="3">
    <location>
        <position position="825"/>
    </location>
</feature>
<feature type="modified residue" description="Phosphoserine" evidence="3">
    <location>
        <position position="829"/>
    </location>
</feature>
<feature type="modified residue" description="Phosphoserine" evidence="3">
    <location>
        <position position="832"/>
    </location>
</feature>
<feature type="modified residue" description="Phosphoserine" evidence="3">
    <location>
        <position position="835"/>
    </location>
</feature>
<reference evidence="8" key="1">
    <citation type="submission" date="2004-01" db="EMBL/GenBank/DDBJ databases">
        <title>Bovine epigenetics.</title>
        <authorList>
            <person name="Golding M.C."/>
            <person name="Long C.R."/>
            <person name="Westhusin M.E."/>
        </authorList>
    </citation>
    <scope>NUCLEOTIDE SEQUENCE [MRNA]</scope>
</reference>
<keyword id="KW-0963">Cytoplasm</keyword>
<keyword id="KW-0255">Endonuclease</keyword>
<keyword id="KW-0378">Hydrolase</keyword>
<keyword id="KW-0379">Hydroxylation</keyword>
<keyword id="KW-0460">Magnesium</keyword>
<keyword id="KW-0464">Manganese</keyword>
<keyword id="KW-0479">Metal-binding</keyword>
<keyword id="KW-0944">Nitration</keyword>
<keyword id="KW-0540">Nuclease</keyword>
<keyword id="KW-0539">Nucleus</keyword>
<keyword id="KW-0597">Phosphoprotein</keyword>
<keyword id="KW-1185">Reference proteome</keyword>
<keyword id="KW-0678">Repressor</keyword>
<keyword id="KW-0687">Ribonucleoprotein</keyword>
<keyword id="KW-0694">RNA-binding</keyword>
<keyword id="KW-0943">RNA-mediated gene silencing</keyword>
<keyword id="KW-0804">Transcription</keyword>
<keyword id="KW-0805">Transcription regulation</keyword>
<keyword id="KW-0810">Translation regulation</keyword>
<keyword id="KW-0832">Ubl conjugation</keyword>